<comment type="function">
    <text evidence="1">One of two assembly initiator proteins, it binds directly to the 5'-end of the 23S rRNA, where it nucleates assembly of the 50S subunit.</text>
</comment>
<comment type="function">
    <text evidence="1">Located at the polypeptide exit tunnel on the outside of the subunit.</text>
</comment>
<comment type="subunit">
    <text evidence="1">Part of the 50S ribosomal subunit.</text>
</comment>
<comment type="similarity">
    <text evidence="1">Belongs to the universal ribosomal protein uL24 family.</text>
</comment>
<sequence length="116" mass="13304">MVSKQPRKQRKARFNAPLHMRQRFMHAMLSPELRKEYKKRSAQVKKGDTVKVMRGDNAGVEGEVLSVDLKRCVITVAGVSNFRADGTEVPRPIHPSNVMITKLDLDDDEREKIFSR</sequence>
<name>RL24_METTP</name>
<organism>
    <name type="scientific">Methanothrix thermoacetophila (strain DSM 6194 / JCM 14653 / NBRC 101360 / PT)</name>
    <name type="common">Methanosaeta thermophila</name>
    <dbReference type="NCBI Taxonomy" id="349307"/>
    <lineage>
        <taxon>Archaea</taxon>
        <taxon>Methanobacteriati</taxon>
        <taxon>Methanobacteriota</taxon>
        <taxon>Stenosarchaea group</taxon>
        <taxon>Methanomicrobia</taxon>
        <taxon>Methanotrichales</taxon>
        <taxon>Methanotrichaceae</taxon>
        <taxon>Methanothrix</taxon>
    </lineage>
</organism>
<proteinExistence type="inferred from homology"/>
<accession>A0B9V9</accession>
<reference key="1">
    <citation type="submission" date="2006-10" db="EMBL/GenBank/DDBJ databases">
        <title>Complete sequence of Methanosaeta thermophila PT.</title>
        <authorList>
            <consortium name="US DOE Joint Genome Institute"/>
            <person name="Copeland A."/>
            <person name="Lucas S."/>
            <person name="Lapidus A."/>
            <person name="Barry K."/>
            <person name="Detter J.C."/>
            <person name="Glavina del Rio T."/>
            <person name="Hammon N."/>
            <person name="Israni S."/>
            <person name="Pitluck S."/>
            <person name="Chain P."/>
            <person name="Malfatti S."/>
            <person name="Shin M."/>
            <person name="Vergez L."/>
            <person name="Schmutz J."/>
            <person name="Larimer F."/>
            <person name="Land M."/>
            <person name="Hauser L."/>
            <person name="Kyrpides N."/>
            <person name="Kim E."/>
            <person name="Smith K.S."/>
            <person name="Ingram-Smith C."/>
            <person name="Richardson P."/>
        </authorList>
    </citation>
    <scope>NUCLEOTIDE SEQUENCE [LARGE SCALE GENOMIC DNA]</scope>
    <source>
        <strain>DSM 6194 / JCM 14653 / NBRC 101360 / PT</strain>
    </source>
</reference>
<evidence type="ECO:0000255" key="1">
    <source>
        <dbReference type="HAMAP-Rule" id="MF_01326"/>
    </source>
</evidence>
<evidence type="ECO:0000305" key="2"/>
<feature type="chain" id="PRO_1000052255" description="Large ribosomal subunit protein uL24">
    <location>
        <begin position="1"/>
        <end position="116"/>
    </location>
</feature>
<dbReference type="EMBL" id="CP000477">
    <property type="protein sequence ID" value="ABK15483.1"/>
    <property type="molecule type" value="Genomic_DNA"/>
</dbReference>
<dbReference type="RefSeq" id="WP_011696861.1">
    <property type="nucleotide sequence ID" value="NC_008553.1"/>
</dbReference>
<dbReference type="SMR" id="A0B9V9"/>
<dbReference type="STRING" id="349307.Mthe_1717"/>
<dbReference type="GeneID" id="4462677"/>
<dbReference type="KEGG" id="mtp:Mthe_1717"/>
<dbReference type="HOGENOM" id="CLU_093240_2_1_2"/>
<dbReference type="OrthoDB" id="10899at2157"/>
<dbReference type="Proteomes" id="UP000000674">
    <property type="component" value="Chromosome"/>
</dbReference>
<dbReference type="GO" id="GO:0015934">
    <property type="term" value="C:large ribosomal subunit"/>
    <property type="evidence" value="ECO:0007669"/>
    <property type="project" value="InterPro"/>
</dbReference>
<dbReference type="GO" id="GO:0019843">
    <property type="term" value="F:rRNA binding"/>
    <property type="evidence" value="ECO:0007669"/>
    <property type="project" value="UniProtKB-UniRule"/>
</dbReference>
<dbReference type="GO" id="GO:0003735">
    <property type="term" value="F:structural constituent of ribosome"/>
    <property type="evidence" value="ECO:0007669"/>
    <property type="project" value="InterPro"/>
</dbReference>
<dbReference type="GO" id="GO:0006412">
    <property type="term" value="P:translation"/>
    <property type="evidence" value="ECO:0007669"/>
    <property type="project" value="UniProtKB-UniRule"/>
</dbReference>
<dbReference type="CDD" id="cd06089">
    <property type="entry name" value="KOW_RPL26"/>
    <property type="match status" value="1"/>
</dbReference>
<dbReference type="FunFam" id="2.30.30.30:FF:000009">
    <property type="entry name" value="60S ribosomal protein L26"/>
    <property type="match status" value="1"/>
</dbReference>
<dbReference type="Gene3D" id="2.30.30.30">
    <property type="match status" value="1"/>
</dbReference>
<dbReference type="HAMAP" id="MF_01326_A">
    <property type="entry name" value="Ribosomal_uL24_A"/>
    <property type="match status" value="1"/>
</dbReference>
<dbReference type="InterPro" id="IPR005824">
    <property type="entry name" value="KOW"/>
</dbReference>
<dbReference type="InterPro" id="IPR014722">
    <property type="entry name" value="Rib_uL2_dom2"/>
</dbReference>
<dbReference type="InterPro" id="IPR005825">
    <property type="entry name" value="Ribosomal_uL24_CS"/>
</dbReference>
<dbReference type="InterPro" id="IPR005756">
    <property type="entry name" value="Ribosomal_uL24_euk/arc"/>
</dbReference>
<dbReference type="InterPro" id="IPR041988">
    <property type="entry name" value="Ribosomal_uL24_KOW"/>
</dbReference>
<dbReference type="InterPro" id="IPR008991">
    <property type="entry name" value="Translation_prot_SH3-like_sf"/>
</dbReference>
<dbReference type="NCBIfam" id="TIGR01080">
    <property type="entry name" value="rplX_A_E"/>
    <property type="match status" value="1"/>
</dbReference>
<dbReference type="PANTHER" id="PTHR11143">
    <property type="entry name" value="60S RIBOSOMAL PROTEIN L26 FAMILY MEMBER"/>
    <property type="match status" value="1"/>
</dbReference>
<dbReference type="Pfam" id="PF00467">
    <property type="entry name" value="KOW"/>
    <property type="match status" value="1"/>
</dbReference>
<dbReference type="Pfam" id="PF16906">
    <property type="entry name" value="Ribosomal_L26"/>
    <property type="match status" value="1"/>
</dbReference>
<dbReference type="SMART" id="SM00739">
    <property type="entry name" value="KOW"/>
    <property type="match status" value="1"/>
</dbReference>
<dbReference type="SUPFAM" id="SSF50104">
    <property type="entry name" value="Translation proteins SH3-like domain"/>
    <property type="match status" value="1"/>
</dbReference>
<dbReference type="PROSITE" id="PS01108">
    <property type="entry name" value="RIBOSOMAL_L24"/>
    <property type="match status" value="1"/>
</dbReference>
<protein>
    <recommendedName>
        <fullName evidence="1">Large ribosomal subunit protein uL24</fullName>
    </recommendedName>
    <alternativeName>
        <fullName evidence="2">50S ribosomal protein L24</fullName>
    </alternativeName>
</protein>
<keyword id="KW-1185">Reference proteome</keyword>
<keyword id="KW-0687">Ribonucleoprotein</keyword>
<keyword id="KW-0689">Ribosomal protein</keyword>
<keyword id="KW-0694">RNA-binding</keyword>
<keyword id="KW-0699">rRNA-binding</keyword>
<gene>
    <name evidence="1" type="primary">rpl24</name>
    <name type="ordered locus">Mthe_1717</name>
</gene>